<feature type="chain" id="PRO_0000293138" description="tRNA-specific adenosine deaminase">
    <location>
        <begin position="1"/>
        <end position="148"/>
    </location>
</feature>
<feature type="domain" description="CMP/dCMP-type deaminase" evidence="2">
    <location>
        <begin position="1"/>
        <end position="116"/>
    </location>
</feature>
<feature type="active site" description="Proton donor" evidence="1">
    <location>
        <position position="50"/>
    </location>
</feature>
<feature type="binding site" evidence="1">
    <location>
        <position position="48"/>
    </location>
    <ligand>
        <name>Zn(2+)</name>
        <dbReference type="ChEBI" id="CHEBI:29105"/>
        <note>catalytic</note>
    </ligand>
</feature>
<feature type="binding site" evidence="1">
    <location>
        <position position="78"/>
    </location>
    <ligand>
        <name>Zn(2+)</name>
        <dbReference type="ChEBI" id="CHEBI:29105"/>
        <note>catalytic</note>
    </ligand>
</feature>
<feature type="binding site" evidence="1">
    <location>
        <position position="81"/>
    </location>
    <ligand>
        <name>Zn(2+)</name>
        <dbReference type="ChEBI" id="CHEBI:29105"/>
        <note>catalytic</note>
    </ligand>
</feature>
<organism>
    <name type="scientific">Rickettsia typhi (strain ATCC VR-144 / Wilmington)</name>
    <dbReference type="NCBI Taxonomy" id="257363"/>
    <lineage>
        <taxon>Bacteria</taxon>
        <taxon>Pseudomonadati</taxon>
        <taxon>Pseudomonadota</taxon>
        <taxon>Alphaproteobacteria</taxon>
        <taxon>Rickettsiales</taxon>
        <taxon>Rickettsiaceae</taxon>
        <taxon>Rickettsieae</taxon>
        <taxon>Rickettsia</taxon>
        <taxon>typhus group</taxon>
    </lineage>
</organism>
<dbReference type="EC" id="3.5.4.33" evidence="1"/>
<dbReference type="EMBL" id="AE017197">
    <property type="protein sequence ID" value="AAU04274.1"/>
    <property type="molecule type" value="Genomic_DNA"/>
</dbReference>
<dbReference type="SMR" id="Q68Y02"/>
<dbReference type="KEGG" id="rty:RT0819"/>
<dbReference type="eggNOG" id="COG0590">
    <property type="taxonomic scope" value="Bacteria"/>
</dbReference>
<dbReference type="HOGENOM" id="CLU_025810_3_2_5"/>
<dbReference type="OrthoDB" id="9802676at2"/>
<dbReference type="Proteomes" id="UP000000604">
    <property type="component" value="Chromosome"/>
</dbReference>
<dbReference type="GO" id="GO:0052717">
    <property type="term" value="F:tRNA-specific adenosine-34 deaminase activity"/>
    <property type="evidence" value="ECO:0007669"/>
    <property type="project" value="UniProtKB-UniRule"/>
</dbReference>
<dbReference type="GO" id="GO:0008270">
    <property type="term" value="F:zinc ion binding"/>
    <property type="evidence" value="ECO:0007669"/>
    <property type="project" value="UniProtKB-UniRule"/>
</dbReference>
<dbReference type="GO" id="GO:0002100">
    <property type="term" value="P:tRNA wobble adenosine to inosine editing"/>
    <property type="evidence" value="ECO:0007669"/>
    <property type="project" value="UniProtKB-UniRule"/>
</dbReference>
<dbReference type="CDD" id="cd01285">
    <property type="entry name" value="nucleoside_deaminase"/>
    <property type="match status" value="1"/>
</dbReference>
<dbReference type="Gene3D" id="3.40.140.10">
    <property type="entry name" value="Cytidine Deaminase, domain 2"/>
    <property type="match status" value="1"/>
</dbReference>
<dbReference type="HAMAP" id="MF_00972">
    <property type="entry name" value="tRNA_aden_deaminase"/>
    <property type="match status" value="1"/>
</dbReference>
<dbReference type="InterPro" id="IPR016192">
    <property type="entry name" value="APOBEC/CMP_deaminase_Zn-bd"/>
</dbReference>
<dbReference type="InterPro" id="IPR002125">
    <property type="entry name" value="CMP_dCMP_dom"/>
</dbReference>
<dbReference type="InterPro" id="IPR016193">
    <property type="entry name" value="Cytidine_deaminase-like"/>
</dbReference>
<dbReference type="InterPro" id="IPR028883">
    <property type="entry name" value="tRNA_aden_deaminase"/>
</dbReference>
<dbReference type="PANTHER" id="PTHR11079">
    <property type="entry name" value="CYTOSINE DEAMINASE FAMILY MEMBER"/>
    <property type="match status" value="1"/>
</dbReference>
<dbReference type="PANTHER" id="PTHR11079:SF179">
    <property type="entry name" value="TRNA(ADENINE(34)) DEAMINASE, CHLOROPLASTIC"/>
    <property type="match status" value="1"/>
</dbReference>
<dbReference type="Pfam" id="PF14437">
    <property type="entry name" value="MafB19-deam"/>
    <property type="match status" value="1"/>
</dbReference>
<dbReference type="SUPFAM" id="SSF53927">
    <property type="entry name" value="Cytidine deaminase-like"/>
    <property type="match status" value="1"/>
</dbReference>
<dbReference type="PROSITE" id="PS00903">
    <property type="entry name" value="CYT_DCMP_DEAMINASES_1"/>
    <property type="match status" value="1"/>
</dbReference>
<dbReference type="PROSITE" id="PS51747">
    <property type="entry name" value="CYT_DCMP_DEAMINASES_2"/>
    <property type="match status" value="1"/>
</dbReference>
<sequence>MEQALKQARLAFDKNEVPVGVVIVYRLNQKIIVSSHNNIEEKNNALCHAEIIAINEACNLISSKNLNDYDIYVTLEPCAMCASAISHSRLKRLFYGASDSKQGAVESNLRYFNSSACFHRPEIYSGILSEHSRFLMKEFFQKMRSTID</sequence>
<name>TADA_RICTY</name>
<gene>
    <name evidence="1" type="primary">tadA</name>
    <name type="ordered locus">RT0819</name>
</gene>
<protein>
    <recommendedName>
        <fullName evidence="1">tRNA-specific adenosine deaminase</fullName>
        <ecNumber evidence="1">3.5.4.33</ecNumber>
    </recommendedName>
</protein>
<evidence type="ECO:0000255" key="1">
    <source>
        <dbReference type="HAMAP-Rule" id="MF_00972"/>
    </source>
</evidence>
<evidence type="ECO:0000255" key="2">
    <source>
        <dbReference type="PROSITE-ProRule" id="PRU01083"/>
    </source>
</evidence>
<keyword id="KW-0378">Hydrolase</keyword>
<keyword id="KW-0479">Metal-binding</keyword>
<keyword id="KW-0819">tRNA processing</keyword>
<keyword id="KW-0862">Zinc</keyword>
<reference key="1">
    <citation type="journal article" date="2004" name="J. Bacteriol.">
        <title>Complete genome sequence of Rickettsia typhi and comparison with sequences of other Rickettsiae.</title>
        <authorList>
            <person name="McLeod M.P."/>
            <person name="Qin X."/>
            <person name="Karpathy S.E."/>
            <person name="Gioia J."/>
            <person name="Highlander S.K."/>
            <person name="Fox G.E."/>
            <person name="McNeill T.Z."/>
            <person name="Jiang H."/>
            <person name="Muzny D."/>
            <person name="Jacob L.S."/>
            <person name="Hawes A.C."/>
            <person name="Sodergren E."/>
            <person name="Gill R."/>
            <person name="Hume J."/>
            <person name="Morgan M."/>
            <person name="Fan G."/>
            <person name="Amin A.G."/>
            <person name="Gibbs R.A."/>
            <person name="Hong C."/>
            <person name="Yu X.-J."/>
            <person name="Walker D.H."/>
            <person name="Weinstock G.M."/>
        </authorList>
    </citation>
    <scope>NUCLEOTIDE SEQUENCE [LARGE SCALE GENOMIC DNA]</scope>
    <source>
        <strain>ATCC VR-144 / Wilmington</strain>
    </source>
</reference>
<comment type="function">
    <text evidence="1">Catalyzes the deamination of adenosine to inosine at the wobble position 34 of tRNA(Arg2).</text>
</comment>
<comment type="catalytic activity">
    <reaction evidence="1">
        <text>adenosine(34) in tRNA + H2O + H(+) = inosine(34) in tRNA + NH4(+)</text>
        <dbReference type="Rhea" id="RHEA:43168"/>
        <dbReference type="Rhea" id="RHEA-COMP:10373"/>
        <dbReference type="Rhea" id="RHEA-COMP:10374"/>
        <dbReference type="ChEBI" id="CHEBI:15377"/>
        <dbReference type="ChEBI" id="CHEBI:15378"/>
        <dbReference type="ChEBI" id="CHEBI:28938"/>
        <dbReference type="ChEBI" id="CHEBI:74411"/>
        <dbReference type="ChEBI" id="CHEBI:82852"/>
        <dbReference type="EC" id="3.5.4.33"/>
    </reaction>
</comment>
<comment type="cofactor">
    <cofactor evidence="1">
        <name>Zn(2+)</name>
        <dbReference type="ChEBI" id="CHEBI:29105"/>
    </cofactor>
    <text evidence="1">Binds 1 zinc ion per subunit.</text>
</comment>
<comment type="subunit">
    <text evidence="1">Homodimer.</text>
</comment>
<comment type="similarity">
    <text evidence="1">Belongs to the cytidine and deoxycytidylate deaminase family.</text>
</comment>
<proteinExistence type="inferred from homology"/>
<accession>Q68Y02</accession>